<reference key="1">
    <citation type="journal article" date="2002" name="Nucleic Acids Res.">
        <title>Genome sequence of Shigella flexneri 2a: insights into pathogenicity through comparison with genomes of Escherichia coli K12 and O157.</title>
        <authorList>
            <person name="Jin Q."/>
            <person name="Yuan Z."/>
            <person name="Xu J."/>
            <person name="Wang Y."/>
            <person name="Shen Y."/>
            <person name="Lu W."/>
            <person name="Wang J."/>
            <person name="Liu H."/>
            <person name="Yang J."/>
            <person name="Yang F."/>
            <person name="Zhang X."/>
            <person name="Zhang J."/>
            <person name="Yang G."/>
            <person name="Wu H."/>
            <person name="Qu D."/>
            <person name="Dong J."/>
            <person name="Sun L."/>
            <person name="Xue Y."/>
            <person name="Zhao A."/>
            <person name="Gao Y."/>
            <person name="Zhu J."/>
            <person name="Kan B."/>
            <person name="Ding K."/>
            <person name="Chen S."/>
            <person name="Cheng H."/>
            <person name="Yao Z."/>
            <person name="He B."/>
            <person name="Chen R."/>
            <person name="Ma D."/>
            <person name="Qiang B."/>
            <person name="Wen Y."/>
            <person name="Hou Y."/>
            <person name="Yu J."/>
        </authorList>
    </citation>
    <scope>NUCLEOTIDE SEQUENCE [LARGE SCALE GENOMIC DNA]</scope>
    <source>
        <strain>301 / Serotype 2a</strain>
    </source>
</reference>
<reference key="2">
    <citation type="journal article" date="2003" name="Infect. Immun.">
        <title>Complete genome sequence and comparative genomics of Shigella flexneri serotype 2a strain 2457T.</title>
        <authorList>
            <person name="Wei J."/>
            <person name="Goldberg M.B."/>
            <person name="Burland V."/>
            <person name="Venkatesan M.M."/>
            <person name="Deng W."/>
            <person name="Fournier G."/>
            <person name="Mayhew G.F."/>
            <person name="Plunkett G. III"/>
            <person name="Rose D.J."/>
            <person name="Darling A."/>
            <person name="Mau B."/>
            <person name="Perna N.T."/>
            <person name="Payne S.M."/>
            <person name="Runyen-Janecky L.J."/>
            <person name="Zhou S."/>
            <person name="Schwartz D.C."/>
            <person name="Blattner F.R."/>
        </authorList>
    </citation>
    <scope>NUCLEOTIDE SEQUENCE [LARGE SCALE GENOMIC DNA]</scope>
    <source>
        <strain>ATCC 700930 / 2457T / Serotype 2a</strain>
    </source>
</reference>
<gene>
    <name evidence="1" type="primary">pheT</name>
    <name type="ordered locus">SF1518</name>
    <name type="ordered locus">S1635</name>
</gene>
<feature type="chain" id="PRO_0000126946" description="Phenylalanine--tRNA ligase beta subunit">
    <location>
        <begin position="1"/>
        <end position="795"/>
    </location>
</feature>
<feature type="domain" description="tRNA-binding" evidence="1">
    <location>
        <begin position="39"/>
        <end position="148"/>
    </location>
</feature>
<feature type="domain" description="B5" evidence="1">
    <location>
        <begin position="401"/>
        <end position="476"/>
    </location>
</feature>
<feature type="domain" description="FDX-ACB" evidence="1">
    <location>
        <begin position="701"/>
        <end position="794"/>
    </location>
</feature>
<feature type="binding site" evidence="1">
    <location>
        <position position="454"/>
    </location>
    <ligand>
        <name>Mg(2+)</name>
        <dbReference type="ChEBI" id="CHEBI:18420"/>
        <note>shared with alpha subunit</note>
    </ligand>
</feature>
<feature type="binding site" evidence="1">
    <location>
        <position position="460"/>
    </location>
    <ligand>
        <name>Mg(2+)</name>
        <dbReference type="ChEBI" id="CHEBI:18420"/>
        <note>shared with alpha subunit</note>
    </ligand>
</feature>
<feature type="binding site" evidence="1">
    <location>
        <position position="463"/>
    </location>
    <ligand>
        <name>Mg(2+)</name>
        <dbReference type="ChEBI" id="CHEBI:18420"/>
        <note>shared with alpha subunit</note>
    </ligand>
</feature>
<feature type="binding site" evidence="1">
    <location>
        <position position="464"/>
    </location>
    <ligand>
        <name>Mg(2+)</name>
        <dbReference type="ChEBI" id="CHEBI:18420"/>
        <note>shared with alpha subunit</note>
    </ligand>
</feature>
<sequence length="795" mass="87411">MKFSELWLREWVNPAIDSDTLANQITMAGLEVDGVEPVAGSFHGVVVGEVVECAQHPNADKLRVTKVNVGGDRLLDIVCGAPNCRQGLRVAVATIGAVLPGDFKIKAAKLRGEPSEGMLCSFSELGISDDHSGIIELPADAPIGTDIREYLKLDDNTIEISVTPNRADCLGIIGVARDVAVLNQLPLVEPEIVPVGATIDDTLPITVEAPEACPRYLGRVVKGINVKAPTPLWMKEKLRRCGIRSIDAVVDVTNYVLLELGQPMHAFDKDRIEGGIVVRMAKEGETLVLLDGTEAKLNADTLVIADHNKALAMGGIFGGEHSGVNDETQNVLLECAFFSPLSITGRARRHGLHTDASHRYERGVDPVLQHKAMERATRLLIDICGGEAGPVIDITNEATLPKRATITLRRSKLDRLIGHHIADEQVTDILRRLGCEVTEGKDEWQAVAPSWRFDMEIEEDLVEEVARVYGYNNIPDEPVQASLIMGTHREADLSLKRVKTLLNDKGYQEVITYSFVDPKVQQMIHPGVEALLLASPISVEMSAMRLSLWTGLLATVVYNQNRQQNRVRIFESGLRFVPDTQAPLGIRQDLMLAGVICGNRYEEHWNLAKETVDFYDLKGDLESVLDLTGKLNEVEFRAEANPALHPGQSAAIYLKGERIGFVGVVHPELERKLDLNGRTLVFELEWNKLADRVVPQAREISRFPANRRDIAVVVAENVPAADILSECKKVGVNQVVGVNLFDVYRGKGVAEGYKSLAISLILQDTSRTLEEEEIAATVAKCVEALKERFQASLRD</sequence>
<protein>
    <recommendedName>
        <fullName evidence="1">Phenylalanine--tRNA ligase beta subunit</fullName>
        <ecNumber evidence="1">6.1.1.20</ecNumber>
    </recommendedName>
    <alternativeName>
        <fullName evidence="1">Phenylalanyl-tRNA synthetase beta subunit</fullName>
        <shortName evidence="1">PheRS</shortName>
    </alternativeName>
</protein>
<comment type="catalytic activity">
    <reaction evidence="1">
        <text>tRNA(Phe) + L-phenylalanine + ATP = L-phenylalanyl-tRNA(Phe) + AMP + diphosphate + H(+)</text>
        <dbReference type="Rhea" id="RHEA:19413"/>
        <dbReference type="Rhea" id="RHEA-COMP:9668"/>
        <dbReference type="Rhea" id="RHEA-COMP:9699"/>
        <dbReference type="ChEBI" id="CHEBI:15378"/>
        <dbReference type="ChEBI" id="CHEBI:30616"/>
        <dbReference type="ChEBI" id="CHEBI:33019"/>
        <dbReference type="ChEBI" id="CHEBI:58095"/>
        <dbReference type="ChEBI" id="CHEBI:78442"/>
        <dbReference type="ChEBI" id="CHEBI:78531"/>
        <dbReference type="ChEBI" id="CHEBI:456215"/>
        <dbReference type="EC" id="6.1.1.20"/>
    </reaction>
</comment>
<comment type="cofactor">
    <cofactor evidence="1">
        <name>Mg(2+)</name>
        <dbReference type="ChEBI" id="CHEBI:18420"/>
    </cofactor>
    <text evidence="1">Binds 2 magnesium ions per tetramer.</text>
</comment>
<comment type="subunit">
    <text evidence="1">Tetramer of two alpha and two beta subunits.</text>
</comment>
<comment type="subcellular location">
    <subcellularLocation>
        <location evidence="1">Cytoplasm</location>
    </subcellularLocation>
</comment>
<comment type="similarity">
    <text evidence="1">Belongs to the phenylalanyl-tRNA synthetase beta subunit family. Type 1 subfamily.</text>
</comment>
<accession>Q83L36</accession>
<keyword id="KW-0030">Aminoacyl-tRNA synthetase</keyword>
<keyword id="KW-0067">ATP-binding</keyword>
<keyword id="KW-0963">Cytoplasm</keyword>
<keyword id="KW-0436">Ligase</keyword>
<keyword id="KW-0460">Magnesium</keyword>
<keyword id="KW-0479">Metal-binding</keyword>
<keyword id="KW-0547">Nucleotide-binding</keyword>
<keyword id="KW-0648">Protein biosynthesis</keyword>
<keyword id="KW-1185">Reference proteome</keyword>
<keyword id="KW-0694">RNA-binding</keyword>
<keyword id="KW-0820">tRNA-binding</keyword>
<organism>
    <name type="scientific">Shigella flexneri</name>
    <dbReference type="NCBI Taxonomy" id="623"/>
    <lineage>
        <taxon>Bacteria</taxon>
        <taxon>Pseudomonadati</taxon>
        <taxon>Pseudomonadota</taxon>
        <taxon>Gammaproteobacteria</taxon>
        <taxon>Enterobacterales</taxon>
        <taxon>Enterobacteriaceae</taxon>
        <taxon>Shigella</taxon>
    </lineage>
</organism>
<proteinExistence type="inferred from homology"/>
<name>SYFB_SHIFL</name>
<dbReference type="EC" id="6.1.1.20" evidence="1"/>
<dbReference type="EMBL" id="AE005674">
    <property type="protein sequence ID" value="AAN43108.1"/>
    <property type="molecule type" value="Genomic_DNA"/>
</dbReference>
<dbReference type="EMBL" id="AE014073">
    <property type="protein sequence ID" value="AAP16998.1"/>
    <property type="molecule type" value="Genomic_DNA"/>
</dbReference>
<dbReference type="RefSeq" id="NP_707401.1">
    <property type="nucleotide sequence ID" value="NC_004337.2"/>
</dbReference>
<dbReference type="RefSeq" id="WP_000672419.1">
    <property type="nucleotide sequence ID" value="NZ_WPGW01000051.1"/>
</dbReference>
<dbReference type="SMR" id="Q83L36"/>
<dbReference type="STRING" id="198214.SF1518"/>
<dbReference type="PaxDb" id="198214-SF1518"/>
<dbReference type="GeneID" id="1024717"/>
<dbReference type="KEGG" id="sfl:SF1518"/>
<dbReference type="KEGG" id="sfx:S1635"/>
<dbReference type="PATRIC" id="fig|198214.7.peg.1793"/>
<dbReference type="HOGENOM" id="CLU_016891_0_0_6"/>
<dbReference type="Proteomes" id="UP000001006">
    <property type="component" value="Chromosome"/>
</dbReference>
<dbReference type="Proteomes" id="UP000002673">
    <property type="component" value="Chromosome"/>
</dbReference>
<dbReference type="GO" id="GO:0009328">
    <property type="term" value="C:phenylalanine-tRNA ligase complex"/>
    <property type="evidence" value="ECO:0007669"/>
    <property type="project" value="TreeGrafter"/>
</dbReference>
<dbReference type="GO" id="GO:0005524">
    <property type="term" value="F:ATP binding"/>
    <property type="evidence" value="ECO:0007669"/>
    <property type="project" value="UniProtKB-UniRule"/>
</dbReference>
<dbReference type="GO" id="GO:0000287">
    <property type="term" value="F:magnesium ion binding"/>
    <property type="evidence" value="ECO:0007669"/>
    <property type="project" value="UniProtKB-UniRule"/>
</dbReference>
<dbReference type="GO" id="GO:0004826">
    <property type="term" value="F:phenylalanine-tRNA ligase activity"/>
    <property type="evidence" value="ECO:0007669"/>
    <property type="project" value="UniProtKB-UniRule"/>
</dbReference>
<dbReference type="GO" id="GO:0000049">
    <property type="term" value="F:tRNA binding"/>
    <property type="evidence" value="ECO:0007669"/>
    <property type="project" value="UniProtKB-KW"/>
</dbReference>
<dbReference type="GO" id="GO:0006432">
    <property type="term" value="P:phenylalanyl-tRNA aminoacylation"/>
    <property type="evidence" value="ECO:0007669"/>
    <property type="project" value="UniProtKB-UniRule"/>
</dbReference>
<dbReference type="CDD" id="cd00769">
    <property type="entry name" value="PheRS_beta_core"/>
    <property type="match status" value="1"/>
</dbReference>
<dbReference type="CDD" id="cd02796">
    <property type="entry name" value="tRNA_bind_bactPheRS"/>
    <property type="match status" value="1"/>
</dbReference>
<dbReference type="FunFam" id="2.40.50.140:FF:000045">
    <property type="entry name" value="Phenylalanine--tRNA ligase beta subunit"/>
    <property type="match status" value="1"/>
</dbReference>
<dbReference type="FunFam" id="3.30.56.10:FF:000002">
    <property type="entry name" value="Phenylalanine--tRNA ligase beta subunit"/>
    <property type="match status" value="1"/>
</dbReference>
<dbReference type="FunFam" id="3.30.70.380:FF:000001">
    <property type="entry name" value="Phenylalanine--tRNA ligase beta subunit"/>
    <property type="match status" value="1"/>
</dbReference>
<dbReference type="FunFam" id="3.30.930.10:FF:000022">
    <property type="entry name" value="Phenylalanine--tRNA ligase beta subunit"/>
    <property type="match status" value="1"/>
</dbReference>
<dbReference type="FunFam" id="3.50.40.10:FF:000001">
    <property type="entry name" value="Phenylalanine--tRNA ligase beta subunit"/>
    <property type="match status" value="1"/>
</dbReference>
<dbReference type="Gene3D" id="3.30.56.10">
    <property type="match status" value="2"/>
</dbReference>
<dbReference type="Gene3D" id="3.30.930.10">
    <property type="entry name" value="Bira Bifunctional Protein, Domain 2"/>
    <property type="match status" value="1"/>
</dbReference>
<dbReference type="Gene3D" id="3.30.70.380">
    <property type="entry name" value="Ferrodoxin-fold anticodon-binding domain"/>
    <property type="match status" value="1"/>
</dbReference>
<dbReference type="Gene3D" id="2.40.50.140">
    <property type="entry name" value="Nucleic acid-binding proteins"/>
    <property type="match status" value="1"/>
</dbReference>
<dbReference type="Gene3D" id="3.50.40.10">
    <property type="entry name" value="Phenylalanyl-trna Synthetase, Chain B, domain 3"/>
    <property type="match status" value="1"/>
</dbReference>
<dbReference type="HAMAP" id="MF_00283">
    <property type="entry name" value="Phe_tRNA_synth_beta1"/>
    <property type="match status" value="1"/>
</dbReference>
<dbReference type="InterPro" id="IPR045864">
    <property type="entry name" value="aa-tRNA-synth_II/BPL/LPL"/>
</dbReference>
<dbReference type="InterPro" id="IPR005146">
    <property type="entry name" value="B3/B4_tRNA-bd"/>
</dbReference>
<dbReference type="InterPro" id="IPR009061">
    <property type="entry name" value="DNA-bd_dom_put_sf"/>
</dbReference>
<dbReference type="InterPro" id="IPR005121">
    <property type="entry name" value="Fdx_antiC-bd"/>
</dbReference>
<dbReference type="InterPro" id="IPR036690">
    <property type="entry name" value="Fdx_antiC-bd_sf"/>
</dbReference>
<dbReference type="InterPro" id="IPR012340">
    <property type="entry name" value="NA-bd_OB-fold"/>
</dbReference>
<dbReference type="InterPro" id="IPR045060">
    <property type="entry name" value="Phe-tRNA-ligase_IIc_bsu"/>
</dbReference>
<dbReference type="InterPro" id="IPR004532">
    <property type="entry name" value="Phe-tRNA-ligase_IIc_bsu_bact"/>
</dbReference>
<dbReference type="InterPro" id="IPR020825">
    <property type="entry name" value="Phe-tRNA_synthase-like_B3/B4"/>
</dbReference>
<dbReference type="InterPro" id="IPR041616">
    <property type="entry name" value="PheRS_beta_core"/>
</dbReference>
<dbReference type="InterPro" id="IPR002547">
    <property type="entry name" value="tRNA-bd_dom"/>
</dbReference>
<dbReference type="InterPro" id="IPR033714">
    <property type="entry name" value="tRNA_bind_bactPheRS"/>
</dbReference>
<dbReference type="InterPro" id="IPR005147">
    <property type="entry name" value="tRNA_synthase_B5-dom"/>
</dbReference>
<dbReference type="NCBIfam" id="TIGR00472">
    <property type="entry name" value="pheT_bact"/>
    <property type="match status" value="1"/>
</dbReference>
<dbReference type="NCBIfam" id="NF045760">
    <property type="entry name" value="YtpR"/>
    <property type="match status" value="1"/>
</dbReference>
<dbReference type="PANTHER" id="PTHR10947:SF0">
    <property type="entry name" value="PHENYLALANINE--TRNA LIGASE BETA SUBUNIT"/>
    <property type="match status" value="1"/>
</dbReference>
<dbReference type="PANTHER" id="PTHR10947">
    <property type="entry name" value="PHENYLALANYL-TRNA SYNTHETASE BETA CHAIN AND LEUCINE-RICH REPEAT-CONTAINING PROTEIN 47"/>
    <property type="match status" value="1"/>
</dbReference>
<dbReference type="Pfam" id="PF03483">
    <property type="entry name" value="B3_4"/>
    <property type="match status" value="1"/>
</dbReference>
<dbReference type="Pfam" id="PF03484">
    <property type="entry name" value="B5"/>
    <property type="match status" value="1"/>
</dbReference>
<dbReference type="Pfam" id="PF03147">
    <property type="entry name" value="FDX-ACB"/>
    <property type="match status" value="1"/>
</dbReference>
<dbReference type="Pfam" id="PF01588">
    <property type="entry name" value="tRNA_bind"/>
    <property type="match status" value="1"/>
</dbReference>
<dbReference type="Pfam" id="PF17759">
    <property type="entry name" value="tRNA_synthFbeta"/>
    <property type="match status" value="1"/>
</dbReference>
<dbReference type="SMART" id="SM00873">
    <property type="entry name" value="B3_4"/>
    <property type="match status" value="1"/>
</dbReference>
<dbReference type="SMART" id="SM00874">
    <property type="entry name" value="B5"/>
    <property type="match status" value="1"/>
</dbReference>
<dbReference type="SMART" id="SM00896">
    <property type="entry name" value="FDX-ACB"/>
    <property type="match status" value="1"/>
</dbReference>
<dbReference type="SUPFAM" id="SSF54991">
    <property type="entry name" value="Anticodon-binding domain of PheRS"/>
    <property type="match status" value="1"/>
</dbReference>
<dbReference type="SUPFAM" id="SSF55681">
    <property type="entry name" value="Class II aaRS and biotin synthetases"/>
    <property type="match status" value="1"/>
</dbReference>
<dbReference type="SUPFAM" id="SSF50249">
    <property type="entry name" value="Nucleic acid-binding proteins"/>
    <property type="match status" value="1"/>
</dbReference>
<dbReference type="SUPFAM" id="SSF56037">
    <property type="entry name" value="PheT/TilS domain"/>
    <property type="match status" value="1"/>
</dbReference>
<dbReference type="SUPFAM" id="SSF46955">
    <property type="entry name" value="Putative DNA-binding domain"/>
    <property type="match status" value="1"/>
</dbReference>
<dbReference type="PROSITE" id="PS51483">
    <property type="entry name" value="B5"/>
    <property type="match status" value="1"/>
</dbReference>
<dbReference type="PROSITE" id="PS51447">
    <property type="entry name" value="FDX_ACB"/>
    <property type="match status" value="1"/>
</dbReference>
<dbReference type="PROSITE" id="PS50886">
    <property type="entry name" value="TRBD"/>
    <property type="match status" value="1"/>
</dbReference>
<evidence type="ECO:0000255" key="1">
    <source>
        <dbReference type="HAMAP-Rule" id="MF_00283"/>
    </source>
</evidence>